<name>G7AC_BREDI</name>
<accession>Q9L5D6</accession>
<organism>
    <name type="scientific">Brevundimonas diminuta</name>
    <name type="common">Pseudomonas diminuta</name>
    <dbReference type="NCBI Taxonomy" id="293"/>
    <lineage>
        <taxon>Bacteria</taxon>
        <taxon>Pseudomonadati</taxon>
        <taxon>Pseudomonadota</taxon>
        <taxon>Alphaproteobacteria</taxon>
        <taxon>Caulobacterales</taxon>
        <taxon>Caulobacteraceae</taxon>
        <taxon>Brevundimonas</taxon>
    </lineage>
</organism>
<protein>
    <recommendedName>
        <fullName>Glutaryl-7-aminocephalosporanic-acid acylase</fullName>
        <shortName>Glutaryl-7-ACA acylase</shortName>
        <ecNumber>3.5.1.93</ecNumber>
    </recommendedName>
    <alternativeName>
        <fullName>7-beta-(4-carboxybutanamido)cephalosporanic acid acylase</fullName>
    </alternativeName>
    <alternativeName>
        <fullName>CAD</fullName>
    </alternativeName>
    <alternativeName>
        <fullName>GL-7-ACA acylase</fullName>
        <shortName>GCA</shortName>
    </alternativeName>
    <component>
        <recommendedName>
            <fullName>Glutaryl-7-aminocephalosporanic-acid acylase subunit alpha</fullName>
            <shortName>Glutaryl-7-ACA acylase subunit alpha</shortName>
        </recommendedName>
    </component>
    <component>
        <recommendedName>
            <fullName>Glutaryl-7-aminocephalosporanic-acid acylase subunit beta</fullName>
            <shortName>Glutaryl-7-ACA acylase subunit beta</shortName>
        </recommendedName>
    </component>
</protein>
<sequence>MLRVLHRAASALVMATVIGLAPGVAFALAEPTSTPQAPIAAYKPRSNEILWDGYGVPHIYGVDAPSAFYGYGWAQARSHGDNILRLYGEARGKGAEYWGPDYEQTTVWLLTNGVPERAQQWYAQQSPDFRANLDAFAAGINAYAQQNPDDISPEVRQVLPVSGADVVAHAHRLMNFLYVASPGRTLGEGDPPDLADQGSNSWAVAPGKTANGNALLLQNPHLSWTTDYFTYYEAHLVTPDFEIYGATQIGLPVIRFAFNQRMGITNTVNGMVGATNYRLTLQDGGYLYDGQVRPFERRQASYRLRQADGSTVDKPLEIRSSVHGPVFERADGTAVAVRVAGLDRPGMLEQYFDMITAHSFDDYEAAMARMQVPTFNIVYADREGTINYSFNGVAPKRAEGDIAFWQGNVPGDSSRYLWTETHPLDDLPRVTNPPGGFVQNSNDPPWTPTWPVTYTPRDHPSYLAPQTPHSLRAQQSVRLMSENDDLTLERFMALQFSHRAVMADRTLPDLIPAALIDPDPEVQAAARLLAAWDREFTSDSRAALLFEEWARLFAGQNFAGQAAFATPWSLDKPVSTPYGVRDPKAAVDQLRTAIANTKRKYGAIDRPFGDASRMILNDVNVPGAAGYGNLGSFRVFTWSDPDENGIRTPVHGETWVAMIEFSTPVRAYGLMSYGNSRQPGTTHYSDQIERVSRADFRELLLRREQVEAAVQERTPFNFKP</sequence>
<feature type="signal peptide" evidence="1">
    <location>
        <begin position="1"/>
        <end position="29"/>
    </location>
</feature>
<feature type="chain" id="PRO_0000027356" description="Glutaryl-7-aminocephalosporanic-acid acylase">
    <location>
        <begin position="30"/>
        <end position="720"/>
    </location>
</feature>
<feature type="chain" id="PRO_0000253782" description="Glutaryl-7-aminocephalosporanic-acid acylase subunit alpha">
    <location>
        <begin position="30"/>
        <end position="187"/>
    </location>
</feature>
<feature type="propeptide" id="PRO_0000253783" description="Spacer peptide">
    <location>
        <begin position="188"/>
        <end position="198"/>
    </location>
</feature>
<feature type="chain" id="PRO_0000253784" description="Glutaryl-7-aminocephalosporanic-acid acylase subunit beta">
    <location>
        <begin position="199"/>
        <end position="720"/>
    </location>
</feature>
<feature type="active site" description="Nucleophile">
    <location>
        <position position="199"/>
    </location>
</feature>
<feature type="active site" evidence="2">
    <location>
        <position position="221"/>
    </location>
</feature>
<feature type="active site" evidence="2">
    <location>
        <position position="653"/>
    </location>
</feature>
<feature type="strand" evidence="6">
    <location>
        <begin position="48"/>
        <end position="52"/>
    </location>
</feature>
<feature type="strand" evidence="6">
    <location>
        <begin position="57"/>
        <end position="60"/>
    </location>
</feature>
<feature type="helix" evidence="6">
    <location>
        <begin position="64"/>
        <end position="90"/>
    </location>
</feature>
<feature type="helix" evidence="6">
    <location>
        <begin position="94"/>
        <end position="98"/>
    </location>
</feature>
<feature type="helix" evidence="6">
    <location>
        <begin position="100"/>
        <end position="102"/>
    </location>
</feature>
<feature type="helix" evidence="6">
    <location>
        <begin position="103"/>
        <end position="111"/>
    </location>
</feature>
<feature type="helix" evidence="6">
    <location>
        <begin position="114"/>
        <end position="123"/>
    </location>
</feature>
<feature type="helix" evidence="6">
    <location>
        <begin position="127"/>
        <end position="146"/>
    </location>
</feature>
<feature type="helix" evidence="6">
    <location>
        <begin position="148"/>
        <end position="150"/>
    </location>
</feature>
<feature type="helix" evidence="6">
    <location>
        <begin position="153"/>
        <end position="158"/>
    </location>
</feature>
<feature type="helix" evidence="6">
    <location>
        <begin position="163"/>
        <end position="175"/>
    </location>
</feature>
<feature type="turn" evidence="6">
    <location>
        <begin position="176"/>
        <end position="179"/>
    </location>
</feature>
<feature type="helix" evidence="6">
    <location>
        <begin position="182"/>
        <end position="186"/>
    </location>
</feature>
<feature type="strand" evidence="6">
    <location>
        <begin position="200"/>
        <end position="204"/>
    </location>
</feature>
<feature type="helix" evidence="6">
    <location>
        <begin position="206"/>
        <end position="208"/>
    </location>
</feature>
<feature type="strand" evidence="6">
    <location>
        <begin position="209"/>
        <end position="212"/>
    </location>
</feature>
<feature type="strand" evidence="6">
    <location>
        <begin position="215"/>
        <end position="219"/>
    </location>
</feature>
<feature type="strand" evidence="6">
    <location>
        <begin position="221"/>
        <end position="225"/>
    </location>
</feature>
<feature type="helix" evidence="6">
    <location>
        <begin position="227"/>
        <end position="229"/>
    </location>
</feature>
<feature type="strand" evidence="6">
    <location>
        <begin position="231"/>
        <end position="237"/>
    </location>
</feature>
<feature type="strand" evidence="6">
    <location>
        <begin position="242"/>
        <end position="248"/>
    </location>
</feature>
<feature type="strand" evidence="6">
    <location>
        <begin position="255"/>
        <end position="258"/>
    </location>
</feature>
<feature type="strand" evidence="6">
    <location>
        <begin position="260"/>
        <end position="267"/>
    </location>
</feature>
<feature type="strand" evidence="6">
    <location>
        <begin position="274"/>
        <end position="278"/>
    </location>
</feature>
<feature type="strand" evidence="6">
    <location>
        <begin position="285"/>
        <end position="288"/>
    </location>
</feature>
<feature type="strand" evidence="6">
    <location>
        <begin position="291"/>
        <end position="293"/>
    </location>
</feature>
<feature type="strand" evidence="6">
    <location>
        <begin position="296"/>
        <end position="305"/>
    </location>
</feature>
<feature type="strand" evidence="6">
    <location>
        <begin position="311"/>
        <end position="320"/>
    </location>
</feature>
<feature type="strand" evidence="6">
    <location>
        <begin position="322"/>
        <end position="328"/>
    </location>
</feature>
<feature type="strand" evidence="6">
    <location>
        <begin position="334"/>
        <end position="339"/>
    </location>
</feature>
<feature type="turn" evidence="6">
    <location>
        <begin position="340"/>
        <end position="343"/>
    </location>
</feature>
<feature type="helix" evidence="6">
    <location>
        <begin position="347"/>
        <end position="355"/>
    </location>
</feature>
<feature type="helix" evidence="6">
    <location>
        <begin position="360"/>
        <end position="367"/>
    </location>
</feature>
<feature type="strand" evidence="6">
    <location>
        <begin position="376"/>
        <end position="381"/>
    </location>
</feature>
<feature type="strand" evidence="6">
    <location>
        <begin position="386"/>
        <end position="390"/>
    </location>
</feature>
<feature type="helix" evidence="6">
    <location>
        <begin position="402"/>
        <end position="406"/>
    </location>
</feature>
<feature type="strand" evidence="6">
    <location>
        <begin position="407"/>
        <end position="412"/>
    </location>
</feature>
<feature type="helix" evidence="6">
    <location>
        <begin position="414"/>
        <end position="416"/>
    </location>
</feature>
<feature type="helix" evidence="6">
    <location>
        <begin position="424"/>
        <end position="426"/>
    </location>
</feature>
<feature type="strand" evidence="6">
    <location>
        <begin position="429"/>
        <end position="432"/>
    </location>
</feature>
<feature type="strand" evidence="6">
    <location>
        <begin position="436"/>
        <end position="439"/>
    </location>
</feature>
<feature type="strand" evidence="6">
    <location>
        <begin position="441"/>
        <end position="443"/>
    </location>
</feature>
<feature type="strand" evidence="6">
    <location>
        <begin position="448"/>
        <end position="451"/>
    </location>
</feature>
<feature type="helix" evidence="6">
    <location>
        <begin position="456"/>
        <end position="458"/>
    </location>
</feature>
<feature type="helix" evidence="6">
    <location>
        <begin position="471"/>
        <end position="481"/>
    </location>
</feature>
<feature type="helix" evidence="6">
    <location>
        <begin position="488"/>
        <end position="495"/>
    </location>
</feature>
<feature type="helix" evidence="6">
    <location>
        <begin position="501"/>
        <end position="515"/>
    </location>
</feature>
<feature type="helix" evidence="6">
    <location>
        <begin position="520"/>
        <end position="530"/>
    </location>
</feature>
<feature type="helix" evidence="6">
    <location>
        <begin position="543"/>
        <end position="553"/>
    </location>
</feature>
<feature type="strand" evidence="6">
    <location>
        <begin position="564"/>
        <end position="566"/>
    </location>
</feature>
<feature type="turn" evidence="6">
    <location>
        <begin position="573"/>
        <end position="575"/>
    </location>
</feature>
<feature type="strand" evidence="6">
    <location>
        <begin position="577"/>
        <end position="581"/>
    </location>
</feature>
<feature type="helix" evidence="6">
    <location>
        <begin position="583"/>
        <end position="601"/>
    </location>
</feature>
<feature type="strand" evidence="7">
    <location>
        <begin position="602"/>
        <end position="605"/>
    </location>
</feature>
<feature type="helix" evidence="6">
    <location>
        <begin position="608"/>
        <end position="611"/>
    </location>
</feature>
<feature type="strand" evidence="6">
    <location>
        <begin position="612"/>
        <end position="616"/>
    </location>
</feature>
<feature type="strand" evidence="6">
    <location>
        <begin position="619"/>
        <end position="622"/>
    </location>
</feature>
<feature type="helix" evidence="6">
    <location>
        <begin position="628"/>
        <end position="630"/>
    </location>
</feature>
<feature type="strand" evidence="6">
    <location>
        <begin position="633"/>
        <end position="638"/>
    </location>
</feature>
<feature type="strand" evidence="6">
    <location>
        <begin position="649"/>
        <end position="653"/>
    </location>
</feature>
<feature type="strand" evidence="6">
    <location>
        <begin position="655"/>
        <end position="660"/>
    </location>
</feature>
<feature type="strand" evidence="6">
    <location>
        <begin position="666"/>
        <end position="671"/>
    </location>
</feature>
<feature type="strand" evidence="6">
    <location>
        <begin position="682"/>
        <end position="687"/>
    </location>
</feature>
<feature type="helix" evidence="6">
    <location>
        <begin position="688"/>
        <end position="691"/>
    </location>
</feature>
<feature type="turn" evidence="6">
    <location>
        <begin position="692"/>
        <end position="694"/>
    </location>
</feature>
<feature type="helix" evidence="6">
    <location>
        <begin position="703"/>
        <end position="709"/>
    </location>
</feature>
<feature type="strand" evidence="6">
    <location>
        <begin position="710"/>
        <end position="715"/>
    </location>
</feature>
<keyword id="KW-0002">3D-structure</keyword>
<keyword id="KW-0046">Antibiotic resistance</keyword>
<keyword id="KW-0378">Hydrolase</keyword>
<keyword id="KW-0574">Periplasm</keyword>
<keyword id="KW-0732">Signal</keyword>
<keyword id="KW-0865">Zymogen</keyword>
<evidence type="ECO:0000250" key="1"/>
<evidence type="ECO:0000255" key="2"/>
<evidence type="ECO:0000269" key="3">
    <source>
    </source>
</evidence>
<evidence type="ECO:0000269" key="4">
    <source ref="2"/>
</evidence>
<evidence type="ECO:0000305" key="5"/>
<evidence type="ECO:0007829" key="6">
    <source>
        <dbReference type="PDB" id="1FM2"/>
    </source>
</evidence>
<evidence type="ECO:0007829" key="7">
    <source>
        <dbReference type="PDB" id="1JVZ"/>
    </source>
</evidence>
<dbReference type="EC" id="3.5.1.93"/>
<dbReference type="EMBL" id="AF251710">
    <property type="protein sequence ID" value="AAF64242.1"/>
    <property type="molecule type" value="Genomic_DNA"/>
</dbReference>
<dbReference type="PDB" id="1FM2">
    <property type="method" value="X-ray"/>
    <property type="resolution" value="2.00 A"/>
    <property type="chains" value="A=30-198, B=199-718"/>
</dbReference>
<dbReference type="PDB" id="1JVZ">
    <property type="method" value="X-ray"/>
    <property type="resolution" value="2.60 A"/>
    <property type="chains" value="A=30-187, B=199-718"/>
</dbReference>
<dbReference type="PDB" id="1JW0">
    <property type="method" value="X-ray"/>
    <property type="resolution" value="2.50 A"/>
    <property type="chains" value="A=30-187, B=199-718"/>
</dbReference>
<dbReference type="PDB" id="1KEH">
    <property type="method" value="X-ray"/>
    <property type="resolution" value="2.50 A"/>
    <property type="chains" value="A=30-718"/>
</dbReference>
<dbReference type="PDBsum" id="1FM2"/>
<dbReference type="PDBsum" id="1JVZ"/>
<dbReference type="PDBsum" id="1JW0"/>
<dbReference type="PDBsum" id="1KEH"/>
<dbReference type="SMR" id="Q9L5D6"/>
<dbReference type="MEROPS" id="S45.002"/>
<dbReference type="KEGG" id="ag:AAF64242"/>
<dbReference type="BRENDA" id="3.5.1.93">
    <property type="organism ID" value="982"/>
</dbReference>
<dbReference type="EvolutionaryTrace" id="Q9L5D6"/>
<dbReference type="GO" id="GO:0042597">
    <property type="term" value="C:periplasmic space"/>
    <property type="evidence" value="ECO:0007669"/>
    <property type="project" value="UniProtKB-SubCell"/>
</dbReference>
<dbReference type="GO" id="GO:0033968">
    <property type="term" value="F:glutaryl-7-aminocephalosporanic-acid acylase activity"/>
    <property type="evidence" value="ECO:0007669"/>
    <property type="project" value="UniProtKB-EC"/>
</dbReference>
<dbReference type="GO" id="GO:0017000">
    <property type="term" value="P:antibiotic biosynthetic process"/>
    <property type="evidence" value="ECO:0007669"/>
    <property type="project" value="InterPro"/>
</dbReference>
<dbReference type="GO" id="GO:0046677">
    <property type="term" value="P:response to antibiotic"/>
    <property type="evidence" value="ECO:0007669"/>
    <property type="project" value="UniProtKB-KW"/>
</dbReference>
<dbReference type="CDD" id="cd01936">
    <property type="entry name" value="Ntn_CA"/>
    <property type="match status" value="1"/>
</dbReference>
<dbReference type="Gene3D" id="1.10.1400.10">
    <property type="match status" value="1"/>
</dbReference>
<dbReference type="Gene3D" id="2.30.120.10">
    <property type="match status" value="1"/>
</dbReference>
<dbReference type="Gene3D" id="3.60.20.10">
    <property type="entry name" value="Glutamine Phosphoribosylpyrophosphate, subunit 1, domain 1"/>
    <property type="match status" value="1"/>
</dbReference>
<dbReference type="Gene3D" id="1.10.439.10">
    <property type="entry name" value="Penicillin Amidohydrolase, domain 1"/>
    <property type="match status" value="1"/>
</dbReference>
<dbReference type="InterPro" id="IPR029055">
    <property type="entry name" value="Ntn_hydrolases_N"/>
</dbReference>
<dbReference type="InterPro" id="IPR014395">
    <property type="entry name" value="Pen/GL7ACA/AHL_acylase"/>
</dbReference>
<dbReference type="InterPro" id="IPR043147">
    <property type="entry name" value="Penicillin_amidase_A-knob"/>
</dbReference>
<dbReference type="InterPro" id="IPR023343">
    <property type="entry name" value="Penicillin_amidase_dom1"/>
</dbReference>
<dbReference type="InterPro" id="IPR043146">
    <property type="entry name" value="Penicillin_amidase_N_B-knob"/>
</dbReference>
<dbReference type="InterPro" id="IPR002692">
    <property type="entry name" value="S45"/>
</dbReference>
<dbReference type="PANTHER" id="PTHR34218:SF3">
    <property type="entry name" value="ACYL-HOMOSERINE LACTONE ACYLASE PVDQ"/>
    <property type="match status" value="1"/>
</dbReference>
<dbReference type="PANTHER" id="PTHR34218">
    <property type="entry name" value="PEPTIDASE S45 PENICILLIN AMIDASE"/>
    <property type="match status" value="1"/>
</dbReference>
<dbReference type="Pfam" id="PF01804">
    <property type="entry name" value="Penicil_amidase"/>
    <property type="match status" value="1"/>
</dbReference>
<dbReference type="PIRSF" id="PIRSF001227">
    <property type="entry name" value="Pen_acylase"/>
    <property type="match status" value="1"/>
</dbReference>
<dbReference type="SUPFAM" id="SSF56235">
    <property type="entry name" value="N-terminal nucleophile aminohydrolases (Ntn hydrolases)"/>
    <property type="match status" value="1"/>
</dbReference>
<reference key="1">
    <citation type="submission" date="2000-04" db="EMBL/GenBank/DDBJ databases">
        <title>Cloning and the nucleotide sequence of a Pseudomonas diminuta KAC-1 glutaryl 7-aminocephalosporanic acid acylase gene.</title>
        <authorList>
            <person name="Kim D.-W."/>
            <person name="Kang S.-M."/>
            <person name="Yoon K.-H."/>
        </authorList>
    </citation>
    <scope>NUCLEOTIDE SEQUENCE [GENOMIC DNA]</scope>
    <source>
        <strain>KAC-1</strain>
    </source>
</reference>
<reference key="2">
    <citation type="journal article" date="1999" name="J. Microbiol.">
        <title>Isolation of novel Pseudomonas diminuta KAC-1 strain producing glutaryl 7-aminocephalosporanic acid acylase.</title>
        <authorList>
            <person name="Kim D.-W."/>
            <person name="Yoon K.-H."/>
        </authorList>
    </citation>
    <scope>FUNCTION</scope>
    <source>
        <strain>KAC-1</strain>
    </source>
</reference>
<reference key="3">
    <citation type="journal article" date="2000" name="Structure">
        <title>The 2.0 A crystal structure of cephalosporin acylase.</title>
        <authorList>
            <person name="Kim Y."/>
            <person name="Yoon K.-H."/>
            <person name="Khang Y."/>
            <person name="Turley S."/>
            <person name="Hol W.G.J."/>
        </authorList>
    </citation>
    <scope>X-RAY CRYSTALLOGRAPHY (2.0 ANGSTROMS) OF 30-720</scope>
    <scope>SUBUNIT</scope>
    <source>
        <strain>KAC-1</strain>
    </source>
</reference>
<reference key="4">
    <citation type="journal article" date="2001" name="Chem. Biol.">
        <title>Structure of cephalosporin acylase in complex with glutaryl-7-aminocephalosporanic acid and glutarate: insight into the basis of its substrate specificity.</title>
        <authorList>
            <person name="Kim Y."/>
            <person name="Hol W.G.J."/>
        </authorList>
    </citation>
    <scope>X-RAY CRYSTALLOGRAPHY (2.5 ANGSTROMS) OF 30-187 AND 199-720 IN COMPLEXES WITH SUBSTRATE AND GLUTARATE</scope>
    <scope>REACTION MECHANISM</scope>
    <source>
        <strain>KAC-1</strain>
    </source>
</reference>
<reference key="5">
    <citation type="journal article" date="2002" name="J. Biol. Chem.">
        <title>Precursor structure of cephalosporin acylase. Insights into autoproteolytic activation in a new N-terminal hydrolase family.</title>
        <authorList>
            <person name="Kim Y."/>
            <person name="Kim S."/>
            <person name="Earnest T.N."/>
            <person name="Hol W.G.J."/>
        </authorList>
    </citation>
    <scope>X-RAY CRYSTALLOGRAPHY (2.5 ANGSTROMS) OF 30-720 OF MUTANT ALA-199</scope>
    <scope>IDENTIFICATION BY MASS SPECTROMETRY</scope>
    <scope>AUTOCATALYTIC CLEAVAGE POSITIONS</scope>
    <source>
        <strain>KAC-1</strain>
    </source>
</reference>
<comment type="function">
    <text evidence="4">Catalyzes the deacylation of 7 beta-(4-carboxybutanamido)cephalosporanic acid (glutaryl-7-aminocephalosporanic acid or GL-7-ACA) to 7-aminocephalosporanic acid (7-ACA). Cannot efficiently use cephalosporin C (CPC), penicillin G, or ampicillin as substrates.</text>
</comment>
<comment type="catalytic activity">
    <reaction>
        <text>(7R)-7-(4-carboxybutanamido)cephalosporanate + H2O = (7R)-7-aminocephalosporanate + glutarate</text>
        <dbReference type="Rhea" id="RHEA:23508"/>
        <dbReference type="ChEBI" id="CHEBI:15377"/>
        <dbReference type="ChEBI" id="CHEBI:30921"/>
        <dbReference type="ChEBI" id="CHEBI:58501"/>
        <dbReference type="ChEBI" id="CHEBI:58693"/>
        <dbReference type="EC" id="3.5.1.93"/>
    </reaction>
</comment>
<comment type="subunit">
    <text evidence="3">Heterodimer of a small subunit and a large subunit processed from the same precursor.</text>
</comment>
<comment type="subcellular location">
    <subcellularLocation>
        <location evidence="5">Periplasm</location>
    </subcellularLocation>
</comment>
<comment type="similarity">
    <text evidence="5">Belongs to the peptidase S45 family.</text>
</comment>
<proteinExistence type="evidence at protein level"/>